<organism>
    <name type="scientific">Haemophilus influenzae (strain PittEE)</name>
    <dbReference type="NCBI Taxonomy" id="374930"/>
    <lineage>
        <taxon>Bacteria</taxon>
        <taxon>Pseudomonadati</taxon>
        <taxon>Pseudomonadota</taxon>
        <taxon>Gammaproteobacteria</taxon>
        <taxon>Pasteurellales</taxon>
        <taxon>Pasteurellaceae</taxon>
        <taxon>Haemophilus</taxon>
    </lineage>
</organism>
<feature type="chain" id="PRO_1000025426" description="Argininosuccinate synthase">
    <location>
        <begin position="1"/>
        <end position="444"/>
    </location>
</feature>
<feature type="binding site" evidence="1">
    <location>
        <begin position="18"/>
        <end position="26"/>
    </location>
    <ligand>
        <name>ATP</name>
        <dbReference type="ChEBI" id="CHEBI:30616"/>
    </ligand>
</feature>
<feature type="binding site" evidence="1">
    <location>
        <position position="44"/>
    </location>
    <ligand>
        <name>ATP</name>
        <dbReference type="ChEBI" id="CHEBI:30616"/>
    </ligand>
</feature>
<feature type="binding site" evidence="1">
    <location>
        <position position="100"/>
    </location>
    <ligand>
        <name>L-citrulline</name>
        <dbReference type="ChEBI" id="CHEBI:57743"/>
    </ligand>
</feature>
<feature type="binding site" evidence="1">
    <location>
        <position position="130"/>
    </location>
    <ligand>
        <name>ATP</name>
        <dbReference type="ChEBI" id="CHEBI:30616"/>
    </ligand>
</feature>
<feature type="binding site" evidence="1">
    <location>
        <position position="132"/>
    </location>
    <ligand>
        <name>ATP</name>
        <dbReference type="ChEBI" id="CHEBI:30616"/>
    </ligand>
</feature>
<feature type="binding site" evidence="1">
    <location>
        <position position="132"/>
    </location>
    <ligand>
        <name>L-aspartate</name>
        <dbReference type="ChEBI" id="CHEBI:29991"/>
    </ligand>
</feature>
<feature type="binding site" evidence="1">
    <location>
        <position position="136"/>
    </location>
    <ligand>
        <name>L-aspartate</name>
        <dbReference type="ChEBI" id="CHEBI:29991"/>
    </ligand>
</feature>
<feature type="binding site" evidence="1">
    <location>
        <position position="136"/>
    </location>
    <ligand>
        <name>L-citrulline</name>
        <dbReference type="ChEBI" id="CHEBI:57743"/>
    </ligand>
</feature>
<feature type="binding site" evidence="1">
    <location>
        <position position="137"/>
    </location>
    <ligand>
        <name>ATP</name>
        <dbReference type="ChEBI" id="CHEBI:30616"/>
    </ligand>
</feature>
<feature type="binding site" evidence="1">
    <location>
        <position position="137"/>
    </location>
    <ligand>
        <name>L-aspartate</name>
        <dbReference type="ChEBI" id="CHEBI:29991"/>
    </ligand>
</feature>
<feature type="binding site" evidence="1">
    <location>
        <position position="140"/>
    </location>
    <ligand>
        <name>L-citrulline</name>
        <dbReference type="ChEBI" id="CHEBI:57743"/>
    </ligand>
</feature>
<feature type="binding site" evidence="1">
    <location>
        <position position="193"/>
    </location>
    <ligand>
        <name>L-citrulline</name>
        <dbReference type="ChEBI" id="CHEBI:57743"/>
    </ligand>
</feature>
<feature type="binding site" evidence="1">
    <location>
        <position position="195"/>
    </location>
    <ligand>
        <name>ATP</name>
        <dbReference type="ChEBI" id="CHEBI:30616"/>
    </ligand>
</feature>
<feature type="binding site" evidence="1">
    <location>
        <position position="202"/>
    </location>
    <ligand>
        <name>L-citrulline</name>
        <dbReference type="ChEBI" id="CHEBI:57743"/>
    </ligand>
</feature>
<feature type="binding site" evidence="1">
    <location>
        <position position="204"/>
    </location>
    <ligand>
        <name>L-citrulline</name>
        <dbReference type="ChEBI" id="CHEBI:57743"/>
    </ligand>
</feature>
<feature type="binding site" evidence="1">
    <location>
        <position position="281"/>
    </location>
    <ligand>
        <name>L-citrulline</name>
        <dbReference type="ChEBI" id="CHEBI:57743"/>
    </ligand>
</feature>
<name>ASSY_HAEIE</name>
<proteinExistence type="inferred from homology"/>
<gene>
    <name evidence="1" type="primary">argG</name>
    <name type="ordered locus">CGSHiEE_03415</name>
</gene>
<dbReference type="EC" id="6.3.4.5" evidence="1"/>
<dbReference type="EMBL" id="CP000671">
    <property type="protein sequence ID" value="ABQ98104.1"/>
    <property type="molecule type" value="Genomic_DNA"/>
</dbReference>
<dbReference type="SMR" id="A5UBF3"/>
<dbReference type="KEGG" id="hip:CGSHiEE_03415"/>
<dbReference type="HOGENOM" id="CLU_032784_4_1_6"/>
<dbReference type="UniPathway" id="UPA00068">
    <property type="reaction ID" value="UER00113"/>
</dbReference>
<dbReference type="GO" id="GO:0005737">
    <property type="term" value="C:cytoplasm"/>
    <property type="evidence" value="ECO:0007669"/>
    <property type="project" value="UniProtKB-SubCell"/>
</dbReference>
<dbReference type="GO" id="GO:0004055">
    <property type="term" value="F:argininosuccinate synthase activity"/>
    <property type="evidence" value="ECO:0007669"/>
    <property type="project" value="UniProtKB-UniRule"/>
</dbReference>
<dbReference type="GO" id="GO:0005524">
    <property type="term" value="F:ATP binding"/>
    <property type="evidence" value="ECO:0007669"/>
    <property type="project" value="UniProtKB-UniRule"/>
</dbReference>
<dbReference type="GO" id="GO:0042803">
    <property type="term" value="F:protein homodimerization activity"/>
    <property type="evidence" value="ECO:0007669"/>
    <property type="project" value="InterPro"/>
</dbReference>
<dbReference type="GO" id="GO:0000053">
    <property type="term" value="P:argininosuccinate metabolic process"/>
    <property type="evidence" value="ECO:0007669"/>
    <property type="project" value="TreeGrafter"/>
</dbReference>
<dbReference type="GO" id="GO:0006526">
    <property type="term" value="P:L-arginine biosynthetic process"/>
    <property type="evidence" value="ECO:0007669"/>
    <property type="project" value="UniProtKB-UniRule"/>
</dbReference>
<dbReference type="GO" id="GO:0000050">
    <property type="term" value="P:urea cycle"/>
    <property type="evidence" value="ECO:0007669"/>
    <property type="project" value="TreeGrafter"/>
</dbReference>
<dbReference type="CDD" id="cd01999">
    <property type="entry name" value="ASS"/>
    <property type="match status" value="1"/>
</dbReference>
<dbReference type="FunFam" id="1.10.287.400:FF:000001">
    <property type="entry name" value="Argininosuccinate synthase"/>
    <property type="match status" value="1"/>
</dbReference>
<dbReference type="Gene3D" id="1.10.287.400">
    <property type="match status" value="1"/>
</dbReference>
<dbReference type="Gene3D" id="3.90.1260.10">
    <property type="entry name" value="Argininosuccinate synthetase, chain A, domain 2"/>
    <property type="match status" value="1"/>
</dbReference>
<dbReference type="Gene3D" id="3.40.50.620">
    <property type="entry name" value="HUPs"/>
    <property type="match status" value="1"/>
</dbReference>
<dbReference type="HAMAP" id="MF_00581">
    <property type="entry name" value="Arg_succ_synth_type2"/>
    <property type="match status" value="1"/>
</dbReference>
<dbReference type="InterPro" id="IPR023437">
    <property type="entry name" value="Arg_succ_synth_type2_subfam"/>
</dbReference>
<dbReference type="InterPro" id="IPR048268">
    <property type="entry name" value="Arginosuc_syn_C"/>
</dbReference>
<dbReference type="InterPro" id="IPR048267">
    <property type="entry name" value="Arginosuc_syn_N"/>
</dbReference>
<dbReference type="InterPro" id="IPR001518">
    <property type="entry name" value="Arginosuc_synth"/>
</dbReference>
<dbReference type="InterPro" id="IPR018223">
    <property type="entry name" value="Arginosuc_synth_CS"/>
</dbReference>
<dbReference type="InterPro" id="IPR023434">
    <property type="entry name" value="Arginosuc_synth_type_1_subfam"/>
</dbReference>
<dbReference type="InterPro" id="IPR024074">
    <property type="entry name" value="AS_cat/multimer_dom_body"/>
</dbReference>
<dbReference type="InterPro" id="IPR024073">
    <property type="entry name" value="AS_multimer_C_tail"/>
</dbReference>
<dbReference type="InterPro" id="IPR014729">
    <property type="entry name" value="Rossmann-like_a/b/a_fold"/>
</dbReference>
<dbReference type="NCBIfam" id="TIGR00032">
    <property type="entry name" value="argG"/>
    <property type="match status" value="1"/>
</dbReference>
<dbReference type="NCBIfam" id="NF003779">
    <property type="entry name" value="PRK05370.1"/>
    <property type="match status" value="1"/>
</dbReference>
<dbReference type="PANTHER" id="PTHR11587">
    <property type="entry name" value="ARGININOSUCCINATE SYNTHASE"/>
    <property type="match status" value="1"/>
</dbReference>
<dbReference type="PANTHER" id="PTHR11587:SF2">
    <property type="entry name" value="ARGININOSUCCINATE SYNTHASE"/>
    <property type="match status" value="1"/>
</dbReference>
<dbReference type="Pfam" id="PF20979">
    <property type="entry name" value="Arginosuc_syn_C"/>
    <property type="match status" value="1"/>
</dbReference>
<dbReference type="Pfam" id="PF00764">
    <property type="entry name" value="Arginosuc_synth"/>
    <property type="match status" value="1"/>
</dbReference>
<dbReference type="SUPFAM" id="SSF52402">
    <property type="entry name" value="Adenine nucleotide alpha hydrolases-like"/>
    <property type="match status" value="1"/>
</dbReference>
<dbReference type="SUPFAM" id="SSF69864">
    <property type="entry name" value="Argininosuccinate synthetase, C-terminal domain"/>
    <property type="match status" value="1"/>
</dbReference>
<dbReference type="PROSITE" id="PS00564">
    <property type="entry name" value="ARGININOSUCCIN_SYN_1"/>
    <property type="match status" value="1"/>
</dbReference>
<dbReference type="PROSITE" id="PS00565">
    <property type="entry name" value="ARGININOSUCCIN_SYN_2"/>
    <property type="match status" value="1"/>
</dbReference>
<reference key="1">
    <citation type="journal article" date="2007" name="Genome Biol.">
        <title>Characterization and modeling of the Haemophilus influenzae core and supragenomes based on the complete genomic sequences of Rd and 12 clinical nontypeable strains.</title>
        <authorList>
            <person name="Hogg J.S."/>
            <person name="Hu F.Z."/>
            <person name="Janto B."/>
            <person name="Boissy R."/>
            <person name="Hayes J."/>
            <person name="Keefe R."/>
            <person name="Post J.C."/>
            <person name="Ehrlich G.D."/>
        </authorList>
    </citation>
    <scope>NUCLEOTIDE SEQUENCE [LARGE SCALE GENOMIC DNA]</scope>
    <source>
        <strain>PittEE</strain>
    </source>
</reference>
<protein>
    <recommendedName>
        <fullName evidence="1">Argininosuccinate synthase</fullName>
        <ecNumber evidence="1">6.3.4.5</ecNumber>
    </recommendedName>
    <alternativeName>
        <fullName evidence="1">Citrulline--aspartate ligase</fullName>
    </alternativeName>
</protein>
<accession>A5UBF3</accession>
<keyword id="KW-0028">Amino-acid biosynthesis</keyword>
<keyword id="KW-0055">Arginine biosynthesis</keyword>
<keyword id="KW-0067">ATP-binding</keyword>
<keyword id="KW-0963">Cytoplasm</keyword>
<keyword id="KW-0436">Ligase</keyword>
<keyword id="KW-0547">Nucleotide-binding</keyword>
<comment type="catalytic activity">
    <reaction evidence="1">
        <text>L-citrulline + L-aspartate + ATP = 2-(N(omega)-L-arginino)succinate + AMP + diphosphate + H(+)</text>
        <dbReference type="Rhea" id="RHEA:10932"/>
        <dbReference type="ChEBI" id="CHEBI:15378"/>
        <dbReference type="ChEBI" id="CHEBI:29991"/>
        <dbReference type="ChEBI" id="CHEBI:30616"/>
        <dbReference type="ChEBI" id="CHEBI:33019"/>
        <dbReference type="ChEBI" id="CHEBI:57472"/>
        <dbReference type="ChEBI" id="CHEBI:57743"/>
        <dbReference type="ChEBI" id="CHEBI:456215"/>
        <dbReference type="EC" id="6.3.4.5"/>
    </reaction>
</comment>
<comment type="pathway">
    <text evidence="1">Amino-acid biosynthesis; L-arginine biosynthesis; L-arginine from L-ornithine and carbamoyl phosphate: step 2/3.</text>
</comment>
<comment type="subunit">
    <text evidence="1">Homotetramer.</text>
</comment>
<comment type="subcellular location">
    <subcellularLocation>
        <location evidence="1">Cytoplasm</location>
    </subcellularLocation>
</comment>
<comment type="similarity">
    <text evidence="1">Belongs to the argininosuccinate synthase family. Type 2 subfamily.</text>
</comment>
<sequence>MSNTILQNLPKGQKVGIAFSGGLDTSAALLWMRQKGAVPYAYTANLGQPDEDDYNAIPKKAMAYGAENARLIDCRSQLAHEGIAAIQCGAFHISTGGIPYFNTTPLGRAVTGTMLVAAMKEDDVNIWGDGSTFKGNDIERFYRYGLLTNPNLKIYKPWLDVQFIEELGGRLEMSQFLIENGFDYKMSVEKAYSTDSNMLGATHEAKDLEQLSTGMKIVKPIMGVAFWDEKVEIKPETVTVTFEDGVPVALNGKHFDNAVDLILEANRIGGRHGLGMSDQIENRIIEAKSRGIYEAPGMALLHIAYERLVTGIHNEDTIEQYRINGIRLGRLLYQGRWFDPQALMLRETAQRWVAKAITGTVTLELRRGNDFTILNTESPNLTYEAERLSMEKVEDAPFDPVDRIGQLTMRNLDVSDTRGKLGIYAQTGLLSAIKDSVLPQLGKK</sequence>
<evidence type="ECO:0000255" key="1">
    <source>
        <dbReference type="HAMAP-Rule" id="MF_00581"/>
    </source>
</evidence>